<comment type="function">
    <text evidence="1">A non-essential component of RNA polymerase (RNAP).</text>
</comment>
<comment type="catalytic activity">
    <reaction evidence="1">
        <text>RNA(n) + a ribonucleoside 5'-triphosphate = RNA(n+1) + diphosphate</text>
        <dbReference type="Rhea" id="RHEA:21248"/>
        <dbReference type="Rhea" id="RHEA-COMP:14527"/>
        <dbReference type="Rhea" id="RHEA-COMP:17342"/>
        <dbReference type="ChEBI" id="CHEBI:33019"/>
        <dbReference type="ChEBI" id="CHEBI:61557"/>
        <dbReference type="ChEBI" id="CHEBI:140395"/>
        <dbReference type="EC" id="2.7.7.6"/>
    </reaction>
</comment>
<comment type="subunit">
    <text evidence="1">RNAP is composed of a core of 2 alpha, a beta and a beta' subunit. The core is associated with a delta subunit, and at least one of epsilon or omega. When a sigma factor is associated with the core the holoenzyme is formed, which can initiate transcription.</text>
</comment>
<comment type="similarity">
    <text evidence="1">Belongs to the RNA polymerase subunit epsilon family.</text>
</comment>
<proteinExistence type="inferred from homology"/>
<sequence length="69" mass="8292">MIFKVFYQETLTETPVREKTQSLYVEAESEVKVRQLLKDEPFHIEFVEKISDAHLAYEKENPDFALWEK</sequence>
<accession>Q721D8</accession>
<gene>
    <name evidence="1" type="primary">rpoY</name>
    <name type="ordered locus">LMOf2365_1049</name>
</gene>
<feature type="chain" id="PRO_0000163131" description="DNA-directed RNA polymerase subunit epsilon">
    <location>
        <begin position="1"/>
        <end position="69"/>
    </location>
</feature>
<name>RPOY_LISMF</name>
<organism>
    <name type="scientific">Listeria monocytogenes serotype 4b (strain F2365)</name>
    <dbReference type="NCBI Taxonomy" id="265669"/>
    <lineage>
        <taxon>Bacteria</taxon>
        <taxon>Bacillati</taxon>
        <taxon>Bacillota</taxon>
        <taxon>Bacilli</taxon>
        <taxon>Bacillales</taxon>
        <taxon>Listeriaceae</taxon>
        <taxon>Listeria</taxon>
    </lineage>
</organism>
<keyword id="KW-0240">DNA-directed RNA polymerase</keyword>
<keyword id="KW-0548">Nucleotidyltransferase</keyword>
<keyword id="KW-0804">Transcription</keyword>
<keyword id="KW-0808">Transferase</keyword>
<protein>
    <recommendedName>
        <fullName evidence="1">DNA-directed RNA polymerase subunit epsilon</fullName>
        <shortName evidence="1">RNAP epsilon subunit</shortName>
        <ecNumber evidence="1">2.7.7.6</ecNumber>
    </recommendedName>
    <alternativeName>
        <fullName evidence="1">RNA polymerase epsilon subunit</fullName>
    </alternativeName>
    <alternativeName>
        <fullName evidence="1">Transcriptase subunit epsilon</fullName>
    </alternativeName>
</protein>
<evidence type="ECO:0000255" key="1">
    <source>
        <dbReference type="HAMAP-Rule" id="MF_01553"/>
    </source>
</evidence>
<dbReference type="EC" id="2.7.7.6" evidence="1"/>
<dbReference type="EMBL" id="AE017262">
    <property type="protein sequence ID" value="AAT03826.1"/>
    <property type="molecule type" value="Genomic_DNA"/>
</dbReference>
<dbReference type="RefSeq" id="WP_003722652.1">
    <property type="nucleotide sequence ID" value="NC_002973.6"/>
</dbReference>
<dbReference type="SMR" id="Q721D8"/>
<dbReference type="KEGG" id="lmf:LMOf2365_1049"/>
<dbReference type="HOGENOM" id="CLU_187518_0_0_9"/>
<dbReference type="GO" id="GO:0000428">
    <property type="term" value="C:DNA-directed RNA polymerase complex"/>
    <property type="evidence" value="ECO:0007669"/>
    <property type="project" value="UniProtKB-KW"/>
</dbReference>
<dbReference type="GO" id="GO:0003677">
    <property type="term" value="F:DNA binding"/>
    <property type="evidence" value="ECO:0007669"/>
    <property type="project" value="UniProtKB-UniRule"/>
</dbReference>
<dbReference type="GO" id="GO:0003899">
    <property type="term" value="F:DNA-directed RNA polymerase activity"/>
    <property type="evidence" value="ECO:0007669"/>
    <property type="project" value="UniProtKB-UniRule"/>
</dbReference>
<dbReference type="GO" id="GO:0006351">
    <property type="term" value="P:DNA-templated transcription"/>
    <property type="evidence" value="ECO:0007669"/>
    <property type="project" value="UniProtKB-UniRule"/>
</dbReference>
<dbReference type="Gene3D" id="3.10.20.730">
    <property type="entry name" value="RNAP, epsilon subunit-like"/>
    <property type="match status" value="1"/>
</dbReference>
<dbReference type="HAMAP" id="MF_01553">
    <property type="entry name" value="RNApol_bact_RpoY"/>
    <property type="match status" value="1"/>
</dbReference>
<dbReference type="InterPro" id="IPR009907">
    <property type="entry name" value="RpoY"/>
</dbReference>
<dbReference type="NCBIfam" id="NF010188">
    <property type="entry name" value="PRK13667.1"/>
    <property type="match status" value="1"/>
</dbReference>
<dbReference type="Pfam" id="PF07288">
    <property type="entry name" value="RpoY"/>
    <property type="match status" value="1"/>
</dbReference>
<reference key="1">
    <citation type="journal article" date="2004" name="Nucleic Acids Res.">
        <title>Whole genome comparisons of serotype 4b and 1/2a strains of the food-borne pathogen Listeria monocytogenes reveal new insights into the core genome components of this species.</title>
        <authorList>
            <person name="Nelson K.E."/>
            <person name="Fouts D.E."/>
            <person name="Mongodin E.F."/>
            <person name="Ravel J."/>
            <person name="DeBoy R.T."/>
            <person name="Kolonay J.F."/>
            <person name="Rasko D.A."/>
            <person name="Angiuoli S.V."/>
            <person name="Gill S.R."/>
            <person name="Paulsen I.T."/>
            <person name="Peterson J.D."/>
            <person name="White O."/>
            <person name="Nelson W.C."/>
            <person name="Nierman W.C."/>
            <person name="Beanan M.J."/>
            <person name="Brinkac L.M."/>
            <person name="Daugherty S.C."/>
            <person name="Dodson R.J."/>
            <person name="Durkin A.S."/>
            <person name="Madupu R."/>
            <person name="Haft D.H."/>
            <person name="Selengut J."/>
            <person name="Van Aken S.E."/>
            <person name="Khouri H.M."/>
            <person name="Fedorova N."/>
            <person name="Forberger H.A."/>
            <person name="Tran B."/>
            <person name="Kathariou S."/>
            <person name="Wonderling L.D."/>
            <person name="Uhlich G.A."/>
            <person name="Bayles D.O."/>
            <person name="Luchansky J.B."/>
            <person name="Fraser C.M."/>
        </authorList>
    </citation>
    <scope>NUCLEOTIDE SEQUENCE [LARGE SCALE GENOMIC DNA]</scope>
    <source>
        <strain>F2365</strain>
    </source>
</reference>